<accession>P66421</accession>
<accession>Q491P2</accession>
<accession>Q9A1W1</accession>
<proteinExistence type="inferred from homology"/>
<keyword id="KW-0479">Metal-binding</keyword>
<keyword id="KW-1185">Reference proteome</keyword>
<keyword id="KW-0687">Ribonucleoprotein</keyword>
<keyword id="KW-0689">Ribosomal protein</keyword>
<keyword id="KW-0694">RNA-binding</keyword>
<keyword id="KW-0699">rRNA-binding</keyword>
<keyword id="KW-0862">Zinc</keyword>
<dbReference type="EMBL" id="AE004092">
    <property type="protein sequence ID" value="AAK33195.1"/>
    <property type="molecule type" value="Genomic_DNA"/>
</dbReference>
<dbReference type="EMBL" id="CP000017">
    <property type="protein sequence ID" value="AAZ50676.1"/>
    <property type="molecule type" value="Genomic_DNA"/>
</dbReference>
<dbReference type="RefSeq" id="NP_268473.1">
    <property type="nucleotide sequence ID" value="NC_002737.2"/>
</dbReference>
<dbReference type="SMR" id="P66421"/>
<dbReference type="PaxDb" id="1314-HKU360_00090"/>
<dbReference type="KEGG" id="spy:SPy_0064"/>
<dbReference type="KEGG" id="spz:M5005_Spy0057"/>
<dbReference type="PATRIC" id="fig|160490.10.peg.57"/>
<dbReference type="HOGENOM" id="CLU_139869_3_0_9"/>
<dbReference type="OMA" id="RAYTRCN"/>
<dbReference type="PRO" id="PR:P66421"/>
<dbReference type="Proteomes" id="UP000000750">
    <property type="component" value="Chromosome"/>
</dbReference>
<dbReference type="GO" id="GO:0015935">
    <property type="term" value="C:small ribosomal subunit"/>
    <property type="evidence" value="ECO:0007669"/>
    <property type="project" value="TreeGrafter"/>
</dbReference>
<dbReference type="GO" id="GO:0019843">
    <property type="term" value="F:rRNA binding"/>
    <property type="evidence" value="ECO:0007669"/>
    <property type="project" value="UniProtKB-UniRule"/>
</dbReference>
<dbReference type="GO" id="GO:0003735">
    <property type="term" value="F:structural constituent of ribosome"/>
    <property type="evidence" value="ECO:0007669"/>
    <property type="project" value="InterPro"/>
</dbReference>
<dbReference type="GO" id="GO:0008270">
    <property type="term" value="F:zinc ion binding"/>
    <property type="evidence" value="ECO:0007669"/>
    <property type="project" value="UniProtKB-UniRule"/>
</dbReference>
<dbReference type="GO" id="GO:0006412">
    <property type="term" value="P:translation"/>
    <property type="evidence" value="ECO:0007669"/>
    <property type="project" value="UniProtKB-UniRule"/>
</dbReference>
<dbReference type="FunFam" id="4.10.830.10:FF:000001">
    <property type="entry name" value="30S ribosomal protein S14 type Z"/>
    <property type="match status" value="1"/>
</dbReference>
<dbReference type="Gene3D" id="4.10.830.10">
    <property type="entry name" value="30s Ribosomal Protein S14, Chain N"/>
    <property type="match status" value="1"/>
</dbReference>
<dbReference type="HAMAP" id="MF_01364_B">
    <property type="entry name" value="Ribosomal_uS14_2_B"/>
    <property type="match status" value="1"/>
</dbReference>
<dbReference type="InterPro" id="IPR001209">
    <property type="entry name" value="Ribosomal_uS14"/>
</dbReference>
<dbReference type="InterPro" id="IPR023053">
    <property type="entry name" value="Ribosomal_uS14_bact"/>
</dbReference>
<dbReference type="InterPro" id="IPR018271">
    <property type="entry name" value="Ribosomal_uS14_CS"/>
</dbReference>
<dbReference type="InterPro" id="IPR043140">
    <property type="entry name" value="Ribosomal_uS14_sf"/>
</dbReference>
<dbReference type="NCBIfam" id="NF005974">
    <property type="entry name" value="PRK08061.1"/>
    <property type="match status" value="1"/>
</dbReference>
<dbReference type="PANTHER" id="PTHR19836">
    <property type="entry name" value="30S RIBOSOMAL PROTEIN S14"/>
    <property type="match status" value="1"/>
</dbReference>
<dbReference type="PANTHER" id="PTHR19836:SF26">
    <property type="entry name" value="SMALL RIBOSOMAL SUBUNIT PROTEIN US14B"/>
    <property type="match status" value="1"/>
</dbReference>
<dbReference type="Pfam" id="PF00253">
    <property type="entry name" value="Ribosomal_S14"/>
    <property type="match status" value="1"/>
</dbReference>
<dbReference type="SUPFAM" id="SSF57716">
    <property type="entry name" value="Glucocorticoid receptor-like (DNA-binding domain)"/>
    <property type="match status" value="1"/>
</dbReference>
<dbReference type="PROSITE" id="PS00527">
    <property type="entry name" value="RIBOSOMAL_S14"/>
    <property type="match status" value="1"/>
</dbReference>
<evidence type="ECO:0000255" key="1">
    <source>
        <dbReference type="HAMAP-Rule" id="MF_01364"/>
    </source>
</evidence>
<evidence type="ECO:0000305" key="2"/>
<organism>
    <name type="scientific">Streptococcus pyogenes serotype M1</name>
    <dbReference type="NCBI Taxonomy" id="301447"/>
    <lineage>
        <taxon>Bacteria</taxon>
        <taxon>Bacillati</taxon>
        <taxon>Bacillota</taxon>
        <taxon>Bacilli</taxon>
        <taxon>Lactobacillales</taxon>
        <taxon>Streptococcaceae</taxon>
        <taxon>Streptococcus</taxon>
    </lineage>
</organism>
<comment type="function">
    <text evidence="1">Binds 16S rRNA, required for the assembly of 30S particles and may also be responsible for determining the conformation of the 16S rRNA at the A site.</text>
</comment>
<comment type="cofactor">
    <cofactor evidence="1">
        <name>Zn(2+)</name>
        <dbReference type="ChEBI" id="CHEBI:29105"/>
    </cofactor>
    <text evidence="1">Binds 1 zinc ion per subunit.</text>
</comment>
<comment type="subunit">
    <text evidence="1">Part of the 30S ribosomal subunit. Contacts proteins S3 and S10.</text>
</comment>
<comment type="similarity">
    <text evidence="1">Belongs to the universal ribosomal protein uS14 family. Zinc-binding uS14 subfamily.</text>
</comment>
<gene>
    <name evidence="1" type="primary">rpsZ</name>
    <name evidence="1" type="synonym">rpsN.1</name>
    <name evidence="1" type="synonym">rpsN1</name>
    <name type="ordered locus">SPy_0064</name>
    <name type="ordered locus">M5005_Spy0057</name>
</gene>
<feature type="chain" id="PRO_0000130943" description="Small ribosomal subunit protein uS14B">
    <location>
        <begin position="1"/>
        <end position="61"/>
    </location>
</feature>
<feature type="binding site" evidence="1">
    <location>
        <position position="24"/>
    </location>
    <ligand>
        <name>Zn(2+)</name>
        <dbReference type="ChEBI" id="CHEBI:29105"/>
    </ligand>
</feature>
<feature type="binding site" evidence="1">
    <location>
        <position position="27"/>
    </location>
    <ligand>
        <name>Zn(2+)</name>
        <dbReference type="ChEBI" id="CHEBI:29105"/>
    </ligand>
</feature>
<feature type="binding site" evidence="1">
    <location>
        <position position="40"/>
    </location>
    <ligand>
        <name>Zn(2+)</name>
        <dbReference type="ChEBI" id="CHEBI:29105"/>
    </ligand>
</feature>
<feature type="binding site" evidence="1">
    <location>
        <position position="43"/>
    </location>
    <ligand>
        <name>Zn(2+)</name>
        <dbReference type="ChEBI" id="CHEBI:29105"/>
    </ligand>
</feature>
<reference key="1">
    <citation type="journal article" date="2001" name="Proc. Natl. Acad. Sci. U.S.A.">
        <title>Complete genome sequence of an M1 strain of Streptococcus pyogenes.</title>
        <authorList>
            <person name="Ferretti J.J."/>
            <person name="McShan W.M."/>
            <person name="Ajdic D.J."/>
            <person name="Savic D.J."/>
            <person name="Savic G."/>
            <person name="Lyon K."/>
            <person name="Primeaux C."/>
            <person name="Sezate S."/>
            <person name="Suvorov A.N."/>
            <person name="Kenton S."/>
            <person name="Lai H.S."/>
            <person name="Lin S.P."/>
            <person name="Qian Y."/>
            <person name="Jia H.G."/>
            <person name="Najar F.Z."/>
            <person name="Ren Q."/>
            <person name="Zhu H."/>
            <person name="Song L."/>
            <person name="White J."/>
            <person name="Yuan X."/>
            <person name="Clifton S.W."/>
            <person name="Roe B.A."/>
            <person name="McLaughlin R.E."/>
        </authorList>
    </citation>
    <scope>NUCLEOTIDE SEQUENCE [LARGE SCALE GENOMIC DNA]</scope>
    <source>
        <strain>ATCC 700294 / SF370 / Serotype M1</strain>
    </source>
</reference>
<reference key="2">
    <citation type="journal article" date="2005" name="J. Infect. Dis.">
        <title>Evolutionary origin and emergence of a highly successful clone of serotype M1 group A Streptococcus involved multiple horizontal gene transfer events.</title>
        <authorList>
            <person name="Sumby P."/>
            <person name="Porcella S.F."/>
            <person name="Madrigal A.G."/>
            <person name="Barbian K.D."/>
            <person name="Virtaneva K."/>
            <person name="Ricklefs S.M."/>
            <person name="Sturdevant D.E."/>
            <person name="Graham M.R."/>
            <person name="Vuopio-Varkila J."/>
            <person name="Hoe N.P."/>
            <person name="Musser J.M."/>
        </authorList>
    </citation>
    <scope>NUCLEOTIDE SEQUENCE [LARGE SCALE GENOMIC DNA]</scope>
    <source>
        <strain>ATCC BAA-947 / MGAS5005 / Serotype M1</strain>
    </source>
</reference>
<protein>
    <recommendedName>
        <fullName evidence="1">Small ribosomal subunit protein uS14B</fullName>
    </recommendedName>
    <alternativeName>
        <fullName evidence="2">30S ribosomal protein S14 type Z</fullName>
    </alternativeName>
    <alternativeName>
        <fullName>30S ribosomal protein S14-1</fullName>
    </alternativeName>
</protein>
<name>RS14Z_STRP1</name>
<sequence length="61" mass="7073">MAKKSMIAKNKRPAKHSTQAYTRCEKCGRPHSVYRKFKLCRVCFRELAYKGQIPGVVKASW</sequence>